<accession>O48449</accession>
<reference key="1">
    <citation type="journal article" date="1997" name="Gene">
        <title>The complete nucleotide sequence and functional organization of Bacillus subtilis bacteriophage SPP1.</title>
        <authorList>
            <person name="Alonso J.C."/>
            <person name="Luder G."/>
            <person name="Stiege A.C."/>
            <person name="Chai S."/>
            <person name="Weise F."/>
            <person name="Trautner T.A."/>
        </authorList>
    </citation>
    <scope>NUCLEOTIDE SEQUENCE [GENOMIC DNA] (ISOFORM TAIL TUBE PROTEIN GP17.1)</scope>
</reference>
<reference key="2">
    <citation type="journal article" date="2007" name="EMBO J.">
        <title>Structure of bacteriophage SPP1 tail reveals trigger for DNA ejection.</title>
        <authorList>
            <person name="Plisson C."/>
            <person name="White H.E."/>
            <person name="Auzat I."/>
            <person name="Zafarani A."/>
            <person name="Sao-Jose C."/>
            <person name="Lhuillier S."/>
            <person name="Tavares P."/>
            <person name="Orlova E.V."/>
        </authorList>
    </citation>
    <scope>FUNCTION</scope>
    <scope>SUBCELLULAR LOCATION</scope>
</reference>
<reference key="3">
    <citation type="journal article" date="2008" name="Mol. Microbiol.">
        <title>Origin and function of the two major tail proteins of bacteriophage SPP1.</title>
        <authorList>
            <person name="Auzat I."/>
            <person name="Droege A."/>
            <person name="Weise F."/>
            <person name="Lurz R."/>
            <person name="Tavares P."/>
        </authorList>
    </citation>
    <scope>PROTEIN SEQUENCE OF 1-8</scope>
    <scope>FUNCTION</scope>
    <scope>RIBOSOMAL FRAMESHIFT</scope>
</reference>
<reference key="4">
    <citation type="journal article" date="2015" name="J. Biol. Chem.">
        <title>Bacteriophage SPP1 tail tube protein self-assembles into beta-structure-rich tubes.</title>
        <authorList>
            <person name="Langlois C."/>
            <person name="Ramboarina S."/>
            <person name="Cukkemane A."/>
            <person name="Auzat I."/>
            <person name="Chagot B."/>
            <person name="Gilquin B."/>
            <person name="Ignatiou A."/>
            <person name="Petitpas I."/>
            <person name="Kasotakis E."/>
            <person name="Paternostre M."/>
            <person name="White H.E."/>
            <person name="Orlova E.V."/>
            <person name="Baldus M."/>
            <person name="Tavares P."/>
            <person name="Zinn-Justin S."/>
        </authorList>
    </citation>
    <scope>SUBUNIT</scope>
</reference>
<reference evidence="9 10" key="5">
    <citation type="journal article" date="2015" name="Proc. Natl. Acad. Sci. U.S.A.">
        <title>Structural rearrangements in the phage head-to-tail interface during assembly and infection.</title>
        <authorList>
            <person name="Chaban Y."/>
            <person name="Lurz R."/>
            <person name="Brasiles S."/>
            <person name="Cornilleau C."/>
            <person name="Karreman M."/>
            <person name="Zinn-Justin S."/>
            <person name="Tavares P."/>
            <person name="Orlova E.V."/>
        </authorList>
    </citation>
    <scope>STRUCTURE BY ELECTRON MICROSCOPY (7.20 ANGSTROMS) OF 1-177</scope>
    <scope>FUNCTION</scope>
    <scope>INTERACTION WITH THE TAIL COMPLETION PROTEIN GP17</scope>
</reference>
<comment type="function">
    <text evidence="2 3 4 5">Forms the 160 nm long, sixfold helical, rigid tail tube. Binding to the entry receptor triggers structural rearrangements of the tail tube leading to ejection of the phage DNA into the host.</text>
</comment>
<comment type="subunit">
    <text evidence="4 5">Homohexamer (PubMed:25525268). Self-assembles into a long sixfold helical tube (PubMed:25525268). SPP1 virion tails are composed of about 40 stacked rings, and each tail ring is rotated by about 21 degrees relative to the previous one (PubMed:25525268). Interacts with the tail completion protein gp17 (PubMed:25991862).</text>
</comment>
<comment type="subcellular location">
    <subcellularLocation>
        <location evidence="2">Virion</location>
    </subcellularLocation>
</comment>
<comment type="alternative products">
    <event type="ribosomal frameshifting"/>
    <isoform>
        <id>O48449-1</id>
        <name>Tail tube protein gp17.1*</name>
        <name>Large tail tube protein</name>
        <sequence type="displayed"/>
    </isoform>
    <isoform>
        <id>O48449-2</id>
        <name>Tail tube protein gp17.1</name>
        <name>Small tail tube protein</name>
        <sequence type="described" ref="VSP_058620"/>
    </isoform>
</comment>
<comment type="PTM">
    <text evidence="3">The tail tube is formed by the proteins gp17.1 and gp17.1* at a ratio of about 3:1.</text>
</comment>
<comment type="miscellaneous">
    <molecule>Isoform Tail tube protein gp17.1*</molecule>
    <text evidence="3">Produced by ribosomal frameshifting.</text>
</comment>
<comment type="miscellaneous">
    <molecule>Isoform Tail tube protein gp17.1</molecule>
    <text evidence="3">Produced by conventional translation.</text>
</comment>
<sequence length="264" mass="28267">MPETPIMGQDVKYLFQSIDAATGSAPLFPAYQTDGSVSGERELFDEQTKNGRILGPGSVADSGEVTYYGKRGDAGQKAIEDAYQNGKQIKFWRVDTVKNENDKYDAQFGFAYIESREYSDGVEGAVEISISLQVIGELKNGEIDTLPEEIVNVSKGGYDFQQPGQTTGEAPGTVPLPNAPQNLTYTATTDSVTVKWDAVEGADSYNVYRGAEKKLDANVTTTSHTLTGIQPDTQLTVNVAAVNAGGESPMSQIVTKTLPAESTG</sequence>
<organism>
    <name type="scientific">Bacillus phage SPP1</name>
    <name type="common">Bacteriophage SPP1</name>
    <dbReference type="NCBI Taxonomy" id="10724"/>
    <lineage>
        <taxon>Viruses</taxon>
        <taxon>Duplodnaviria</taxon>
        <taxon>Heunggongvirae</taxon>
        <taxon>Uroviricota</taxon>
        <taxon>Caudoviricetes</taxon>
    </lineage>
</organism>
<proteinExistence type="evidence at protein level"/>
<gene>
    <name type="primary">17.1</name>
</gene>
<dbReference type="EMBL" id="X97918">
    <property type="protein sequence ID" value="CAA66550.1"/>
    <property type="molecule type" value="Genomic_DNA"/>
</dbReference>
<dbReference type="PIR" id="T42289">
    <property type="entry name" value="T42289"/>
</dbReference>
<dbReference type="RefSeq" id="NP_690680.1">
    <molecule id="O48449-2"/>
    <property type="nucleotide sequence ID" value="NC_004166.2"/>
</dbReference>
<dbReference type="RefSeq" id="YP_710298.1">
    <molecule id="O48449-1"/>
    <property type="nucleotide sequence ID" value="NC_004166.2"/>
</dbReference>
<dbReference type="PDB" id="5A20">
    <property type="method" value="EM"/>
    <property type="resolution" value="7.60 A"/>
    <property type="chains" value="H=1-177"/>
</dbReference>
<dbReference type="PDB" id="5A21">
    <property type="method" value="EM"/>
    <property type="resolution" value="7.20 A"/>
    <property type="chains" value="H=1-177"/>
</dbReference>
<dbReference type="PDB" id="6YEG">
    <property type="method" value="Other"/>
    <property type="resolution" value="4.00 A"/>
    <property type="chains" value="A/B/C/D/E/F/G/H/I/J/K/L=5-177"/>
</dbReference>
<dbReference type="PDB" id="6YQ5">
    <property type="method" value="Other"/>
    <property type="resolution" value="4.00 A"/>
    <property type="chains" value="A/B/C/D/E/F/G/H/I/J/K/L=5-175"/>
</dbReference>
<dbReference type="PDBsum" id="5A20"/>
<dbReference type="PDBsum" id="5A21"/>
<dbReference type="PDBsum" id="6YEG"/>
<dbReference type="PDBsum" id="6YQ5"/>
<dbReference type="EMDB" id="EMD-10792"/>
<dbReference type="EMDB" id="EMD-2993"/>
<dbReference type="EMDB" id="EMD-2994"/>
<dbReference type="SMR" id="O48449"/>
<dbReference type="KEGG" id="vg:4229189"/>
<dbReference type="KEGG" id="vg:955320"/>
<dbReference type="OrthoDB" id="14316at10239"/>
<dbReference type="EvolutionaryTrace" id="O48449"/>
<dbReference type="Proteomes" id="UP000002559">
    <property type="component" value="Genome"/>
</dbReference>
<dbReference type="GO" id="GO:0098026">
    <property type="term" value="C:virus tail, tube"/>
    <property type="evidence" value="ECO:0000314"/>
    <property type="project" value="UniProtKB"/>
</dbReference>
<dbReference type="GO" id="GO:0099001">
    <property type="term" value="P:symbiont genome ejection through host cell envelope, long flexible tail mechanism"/>
    <property type="evidence" value="ECO:0007669"/>
    <property type="project" value="UniProtKB-KW"/>
</dbReference>
<dbReference type="GO" id="GO:0098005">
    <property type="term" value="P:viral head-tail joining"/>
    <property type="evidence" value="ECO:0000314"/>
    <property type="project" value="CACAO"/>
</dbReference>
<dbReference type="GO" id="GO:0075523">
    <property type="term" value="P:viral translational frameshifting"/>
    <property type="evidence" value="ECO:0007669"/>
    <property type="project" value="UniProtKB-KW"/>
</dbReference>
<dbReference type="CDD" id="cd00063">
    <property type="entry name" value="FN3"/>
    <property type="match status" value="1"/>
</dbReference>
<dbReference type="Gene3D" id="2.60.40.10">
    <property type="entry name" value="Immunoglobulins"/>
    <property type="match status" value="1"/>
</dbReference>
<dbReference type="InterPro" id="IPR003961">
    <property type="entry name" value="FN3_dom"/>
</dbReference>
<dbReference type="InterPro" id="IPR036116">
    <property type="entry name" value="FN3_sf"/>
</dbReference>
<dbReference type="InterPro" id="IPR013783">
    <property type="entry name" value="Ig-like_fold"/>
</dbReference>
<dbReference type="InterPro" id="IPR011855">
    <property type="entry name" value="Phgtail_TP901_1"/>
</dbReference>
<dbReference type="NCBIfam" id="TIGR02126">
    <property type="entry name" value="phgtail_TP901_1"/>
    <property type="match status" value="1"/>
</dbReference>
<dbReference type="Pfam" id="PF00041">
    <property type="entry name" value="fn3"/>
    <property type="match status" value="1"/>
</dbReference>
<dbReference type="Pfam" id="PF06199">
    <property type="entry name" value="Phage_tail_2"/>
    <property type="match status" value="1"/>
</dbReference>
<dbReference type="SMART" id="SM00060">
    <property type="entry name" value="FN3"/>
    <property type="match status" value="1"/>
</dbReference>
<dbReference type="SUPFAM" id="SSF49265">
    <property type="entry name" value="Fibronectin type III"/>
    <property type="match status" value="1"/>
</dbReference>
<dbReference type="PROSITE" id="PS50853">
    <property type="entry name" value="FN3"/>
    <property type="match status" value="1"/>
</dbReference>
<protein>
    <recommendedName>
        <fullName evidence="6">Tail tube protein gp17.1*</fullName>
        <shortName evidence="8">TTP</shortName>
    </recommendedName>
    <alternativeName>
        <fullName evidence="8">Gene product 17.1</fullName>
        <shortName evidence="8">gp17.1</shortName>
    </alternativeName>
    <alternativeName>
        <fullName evidence="7">Major tail protein</fullName>
        <shortName evidence="7">MTP</shortName>
    </alternativeName>
</protein>
<keyword id="KW-0002">3D-structure</keyword>
<keyword id="KW-0903">Direct protein sequencing</keyword>
<keyword id="KW-1185">Reference proteome</keyword>
<keyword id="KW-0688">Ribosomal frameshifting</keyword>
<keyword id="KW-1171">Viral genome ejection through host cell envelope</keyword>
<keyword id="KW-1243">Viral long flexible tail ejection system</keyword>
<keyword id="KW-1162">Viral penetration into host cytoplasm</keyword>
<keyword id="KW-1227">Viral tail protein</keyword>
<keyword id="KW-1228">Viral tail tube protein</keyword>
<keyword id="KW-0946">Virion</keyword>
<keyword id="KW-1160">Virus entry into host cell</keyword>
<name>TUBE_BPSPP</name>
<feature type="chain" id="PRO_0000408481" description="Tail tube protein gp17.1*">
    <location>
        <begin position="1"/>
        <end position="264"/>
    </location>
</feature>
<feature type="domain" description="Fibronectin type-III" evidence="1">
    <location>
        <begin position="179"/>
        <end position="261"/>
    </location>
</feature>
<feature type="splice variant" id="VSP_058620" description="In isoform Tail tube protein gp17.1.">
    <original>LPNAPQNLTYTATTDSVTVKWDAVEGADSYNVYRGAEKKLDANVTTTSHTLTGIQPDTQLTVNVAAVNAGGESPMSQIVTKTLPAESTG</original>
    <variation>AP</variation>
    <location>
        <begin position="176"/>
        <end position="264"/>
    </location>
</feature>
<organismHost>
    <name type="scientific">Bacillus subtilis</name>
    <dbReference type="NCBI Taxonomy" id="1423"/>
</organismHost>
<evidence type="ECO:0000255" key="1">
    <source>
        <dbReference type="PROSITE-ProRule" id="PRU00316"/>
    </source>
</evidence>
<evidence type="ECO:0000269" key="2">
    <source>
    </source>
</evidence>
<evidence type="ECO:0000269" key="3">
    <source>
    </source>
</evidence>
<evidence type="ECO:0000269" key="4">
    <source>
    </source>
</evidence>
<evidence type="ECO:0000269" key="5">
    <source>
    </source>
</evidence>
<evidence type="ECO:0000303" key="6">
    <source>
    </source>
</evidence>
<evidence type="ECO:0000303" key="7">
    <source>
    </source>
</evidence>
<evidence type="ECO:0000305" key="8"/>
<evidence type="ECO:0007744" key="9">
    <source>
        <dbReference type="PDB" id="5A20"/>
    </source>
</evidence>
<evidence type="ECO:0007744" key="10">
    <source>
        <dbReference type="PDB" id="5A21"/>
    </source>
</evidence>